<gene>
    <name evidence="1" type="primary">purA</name>
    <name type="ordered locus">DIP2063</name>
</gene>
<sequence>MAAIVIVGAQWGDEGKGKATDILGGQVDYVVKPNGGNNAGHTVVVGGEKYELKLLPAGVLSENATPILGNGVVINLEALFEEMDGLIARGCDASRLRISSNAHLVAPYHQILDRVQERFLGKRAIGTTGRGIGPTYADKVSRVGIRVQDVFDESILRQKIESALNVKNQTLVKMYNRKAIVAEEMVQYFLGYVERLRPMVIEAELELNRGLDAGKHVLMEGGQATMLDVDHGTYPFVTSSNPTAGGACVGSGIGPTRITSSLGIIKAYTTRVGAGPFPTELFDKWGEFLQTTGGEVGVNTGRKRRCGWYDSVVARYASRVNGFTDLFLTKLDVLTGIGEIPICVAYDVDGVRHDEMPMTQSDFHHATPIYETMPAWDEDITGCKTFDDLPEKAQAYVRRLEELSGCRISYIGVGPGRDQTIVCHDVMEA</sequence>
<reference key="1">
    <citation type="journal article" date="2003" name="Nucleic Acids Res.">
        <title>The complete genome sequence and analysis of Corynebacterium diphtheriae NCTC13129.</title>
        <authorList>
            <person name="Cerdeno-Tarraga A.-M."/>
            <person name="Efstratiou A."/>
            <person name="Dover L.G."/>
            <person name="Holden M.T.G."/>
            <person name="Pallen M.J."/>
            <person name="Bentley S.D."/>
            <person name="Besra G.S."/>
            <person name="Churcher C.M."/>
            <person name="James K.D."/>
            <person name="De Zoysa A."/>
            <person name="Chillingworth T."/>
            <person name="Cronin A."/>
            <person name="Dowd L."/>
            <person name="Feltwell T."/>
            <person name="Hamlin N."/>
            <person name="Holroyd S."/>
            <person name="Jagels K."/>
            <person name="Moule S."/>
            <person name="Quail M.A."/>
            <person name="Rabbinowitsch E."/>
            <person name="Rutherford K.M."/>
            <person name="Thomson N.R."/>
            <person name="Unwin L."/>
            <person name="Whitehead S."/>
            <person name="Barrell B.G."/>
            <person name="Parkhill J."/>
        </authorList>
    </citation>
    <scope>NUCLEOTIDE SEQUENCE [LARGE SCALE GENOMIC DNA]</scope>
    <source>
        <strain>ATCC 700971 / NCTC 13129 / Biotype gravis</strain>
    </source>
</reference>
<protein>
    <recommendedName>
        <fullName evidence="1">Adenylosuccinate synthetase</fullName>
        <shortName evidence="1">AMPSase</shortName>
        <shortName evidence="1">AdSS</shortName>
        <ecNumber evidence="1">6.3.4.4</ecNumber>
    </recommendedName>
    <alternativeName>
        <fullName evidence="1">IMP--aspartate ligase</fullName>
    </alternativeName>
</protein>
<name>PURA_CORDI</name>
<feature type="chain" id="PRO_0000224269" description="Adenylosuccinate synthetase">
    <location>
        <begin position="1"/>
        <end position="429"/>
    </location>
</feature>
<feature type="active site" description="Proton acceptor" evidence="1">
    <location>
        <position position="13"/>
    </location>
</feature>
<feature type="active site" description="Proton donor" evidence="1">
    <location>
        <position position="41"/>
    </location>
</feature>
<feature type="binding site" evidence="1">
    <location>
        <begin position="12"/>
        <end position="18"/>
    </location>
    <ligand>
        <name>GTP</name>
        <dbReference type="ChEBI" id="CHEBI:37565"/>
    </ligand>
</feature>
<feature type="binding site" description="in other chain" evidence="1">
    <location>
        <begin position="13"/>
        <end position="16"/>
    </location>
    <ligand>
        <name>IMP</name>
        <dbReference type="ChEBI" id="CHEBI:58053"/>
        <note>ligand shared between dimeric partners</note>
    </ligand>
</feature>
<feature type="binding site" evidence="1">
    <location>
        <position position="13"/>
    </location>
    <ligand>
        <name>Mg(2+)</name>
        <dbReference type="ChEBI" id="CHEBI:18420"/>
    </ligand>
</feature>
<feature type="binding site" description="in other chain" evidence="1">
    <location>
        <begin position="38"/>
        <end position="41"/>
    </location>
    <ligand>
        <name>IMP</name>
        <dbReference type="ChEBI" id="CHEBI:58053"/>
        <note>ligand shared between dimeric partners</note>
    </ligand>
</feature>
<feature type="binding site" evidence="1">
    <location>
        <begin position="40"/>
        <end position="42"/>
    </location>
    <ligand>
        <name>GTP</name>
        <dbReference type="ChEBI" id="CHEBI:37565"/>
    </ligand>
</feature>
<feature type="binding site" evidence="1">
    <location>
        <position position="40"/>
    </location>
    <ligand>
        <name>Mg(2+)</name>
        <dbReference type="ChEBI" id="CHEBI:18420"/>
    </ligand>
</feature>
<feature type="binding site" description="in other chain" evidence="1">
    <location>
        <position position="128"/>
    </location>
    <ligand>
        <name>IMP</name>
        <dbReference type="ChEBI" id="CHEBI:58053"/>
        <note>ligand shared between dimeric partners</note>
    </ligand>
</feature>
<feature type="binding site" evidence="1">
    <location>
        <position position="142"/>
    </location>
    <ligand>
        <name>IMP</name>
        <dbReference type="ChEBI" id="CHEBI:58053"/>
        <note>ligand shared between dimeric partners</note>
    </ligand>
</feature>
<feature type="binding site" description="in other chain" evidence="1">
    <location>
        <position position="223"/>
    </location>
    <ligand>
        <name>IMP</name>
        <dbReference type="ChEBI" id="CHEBI:58053"/>
        <note>ligand shared between dimeric partners</note>
    </ligand>
</feature>
<feature type="binding site" description="in other chain" evidence="1">
    <location>
        <position position="238"/>
    </location>
    <ligand>
        <name>IMP</name>
        <dbReference type="ChEBI" id="CHEBI:58053"/>
        <note>ligand shared between dimeric partners</note>
    </ligand>
</feature>
<feature type="binding site" evidence="1">
    <location>
        <begin position="298"/>
        <end position="304"/>
    </location>
    <ligand>
        <name>substrate</name>
    </ligand>
</feature>
<feature type="binding site" description="in other chain" evidence="1">
    <location>
        <position position="302"/>
    </location>
    <ligand>
        <name>IMP</name>
        <dbReference type="ChEBI" id="CHEBI:58053"/>
        <note>ligand shared between dimeric partners</note>
    </ligand>
</feature>
<feature type="binding site" evidence="1">
    <location>
        <position position="304"/>
    </location>
    <ligand>
        <name>GTP</name>
        <dbReference type="ChEBI" id="CHEBI:37565"/>
    </ligand>
</feature>
<feature type="binding site" evidence="1">
    <location>
        <begin position="330"/>
        <end position="332"/>
    </location>
    <ligand>
        <name>GTP</name>
        <dbReference type="ChEBI" id="CHEBI:37565"/>
    </ligand>
</feature>
<feature type="binding site" evidence="1">
    <location>
        <begin position="412"/>
        <end position="414"/>
    </location>
    <ligand>
        <name>GTP</name>
        <dbReference type="ChEBI" id="CHEBI:37565"/>
    </ligand>
</feature>
<proteinExistence type="inferred from homology"/>
<comment type="function">
    <text evidence="1">Plays an important role in the de novo pathway of purine nucleotide biosynthesis. Catalyzes the first committed step in the biosynthesis of AMP from IMP.</text>
</comment>
<comment type="catalytic activity">
    <reaction evidence="1">
        <text>IMP + L-aspartate + GTP = N(6)-(1,2-dicarboxyethyl)-AMP + GDP + phosphate + 2 H(+)</text>
        <dbReference type="Rhea" id="RHEA:15753"/>
        <dbReference type="ChEBI" id="CHEBI:15378"/>
        <dbReference type="ChEBI" id="CHEBI:29991"/>
        <dbReference type="ChEBI" id="CHEBI:37565"/>
        <dbReference type="ChEBI" id="CHEBI:43474"/>
        <dbReference type="ChEBI" id="CHEBI:57567"/>
        <dbReference type="ChEBI" id="CHEBI:58053"/>
        <dbReference type="ChEBI" id="CHEBI:58189"/>
        <dbReference type="EC" id="6.3.4.4"/>
    </reaction>
</comment>
<comment type="cofactor">
    <cofactor evidence="1">
        <name>Mg(2+)</name>
        <dbReference type="ChEBI" id="CHEBI:18420"/>
    </cofactor>
    <text evidence="1">Binds 1 Mg(2+) ion per subunit.</text>
</comment>
<comment type="pathway">
    <text evidence="1">Purine metabolism; AMP biosynthesis via de novo pathway; AMP from IMP: step 1/2.</text>
</comment>
<comment type="subunit">
    <text evidence="1">Homodimer.</text>
</comment>
<comment type="subcellular location">
    <subcellularLocation>
        <location evidence="1">Cytoplasm</location>
    </subcellularLocation>
</comment>
<comment type="similarity">
    <text evidence="1">Belongs to the adenylosuccinate synthetase family.</text>
</comment>
<dbReference type="EC" id="6.3.4.4" evidence="1"/>
<dbReference type="EMBL" id="BX248360">
    <property type="protein sequence ID" value="CAE50589.1"/>
    <property type="molecule type" value="Genomic_DNA"/>
</dbReference>
<dbReference type="RefSeq" id="WP_010935542.1">
    <property type="nucleotide sequence ID" value="NC_002935.2"/>
</dbReference>
<dbReference type="SMR" id="Q6NF38"/>
<dbReference type="STRING" id="257309.DIP2063"/>
<dbReference type="KEGG" id="cdi:DIP2063"/>
<dbReference type="HOGENOM" id="CLU_029848_0_0_11"/>
<dbReference type="UniPathway" id="UPA00075">
    <property type="reaction ID" value="UER00335"/>
</dbReference>
<dbReference type="Proteomes" id="UP000002198">
    <property type="component" value="Chromosome"/>
</dbReference>
<dbReference type="GO" id="GO:0005737">
    <property type="term" value="C:cytoplasm"/>
    <property type="evidence" value="ECO:0007669"/>
    <property type="project" value="UniProtKB-SubCell"/>
</dbReference>
<dbReference type="GO" id="GO:0004019">
    <property type="term" value="F:adenylosuccinate synthase activity"/>
    <property type="evidence" value="ECO:0007669"/>
    <property type="project" value="UniProtKB-UniRule"/>
</dbReference>
<dbReference type="GO" id="GO:0005525">
    <property type="term" value="F:GTP binding"/>
    <property type="evidence" value="ECO:0007669"/>
    <property type="project" value="UniProtKB-UniRule"/>
</dbReference>
<dbReference type="GO" id="GO:0000287">
    <property type="term" value="F:magnesium ion binding"/>
    <property type="evidence" value="ECO:0007669"/>
    <property type="project" value="UniProtKB-UniRule"/>
</dbReference>
<dbReference type="GO" id="GO:0044208">
    <property type="term" value="P:'de novo' AMP biosynthetic process"/>
    <property type="evidence" value="ECO:0007669"/>
    <property type="project" value="UniProtKB-UniRule"/>
</dbReference>
<dbReference type="GO" id="GO:0046040">
    <property type="term" value="P:IMP metabolic process"/>
    <property type="evidence" value="ECO:0007669"/>
    <property type="project" value="TreeGrafter"/>
</dbReference>
<dbReference type="CDD" id="cd03108">
    <property type="entry name" value="AdSS"/>
    <property type="match status" value="1"/>
</dbReference>
<dbReference type="FunFam" id="1.10.300.10:FF:000001">
    <property type="entry name" value="Adenylosuccinate synthetase"/>
    <property type="match status" value="1"/>
</dbReference>
<dbReference type="FunFam" id="3.90.170.10:FF:000001">
    <property type="entry name" value="Adenylosuccinate synthetase"/>
    <property type="match status" value="1"/>
</dbReference>
<dbReference type="Gene3D" id="3.40.440.10">
    <property type="entry name" value="Adenylosuccinate Synthetase, subunit A, domain 1"/>
    <property type="match status" value="1"/>
</dbReference>
<dbReference type="Gene3D" id="1.10.300.10">
    <property type="entry name" value="Adenylosuccinate Synthetase, subunit A, domain 2"/>
    <property type="match status" value="1"/>
</dbReference>
<dbReference type="Gene3D" id="3.90.170.10">
    <property type="entry name" value="Adenylosuccinate Synthetase, subunit A, domain 3"/>
    <property type="match status" value="1"/>
</dbReference>
<dbReference type="HAMAP" id="MF_00011">
    <property type="entry name" value="Adenylosucc_synth"/>
    <property type="match status" value="1"/>
</dbReference>
<dbReference type="InterPro" id="IPR018220">
    <property type="entry name" value="Adenylosuccin_syn_GTP-bd"/>
</dbReference>
<dbReference type="InterPro" id="IPR033128">
    <property type="entry name" value="Adenylosuccin_syn_Lys_AS"/>
</dbReference>
<dbReference type="InterPro" id="IPR042109">
    <property type="entry name" value="Adenylosuccinate_synth_dom1"/>
</dbReference>
<dbReference type="InterPro" id="IPR042110">
    <property type="entry name" value="Adenylosuccinate_synth_dom2"/>
</dbReference>
<dbReference type="InterPro" id="IPR042111">
    <property type="entry name" value="Adenylosuccinate_synth_dom3"/>
</dbReference>
<dbReference type="InterPro" id="IPR001114">
    <property type="entry name" value="Adenylosuccinate_synthetase"/>
</dbReference>
<dbReference type="InterPro" id="IPR027417">
    <property type="entry name" value="P-loop_NTPase"/>
</dbReference>
<dbReference type="NCBIfam" id="NF002223">
    <property type="entry name" value="PRK01117.1"/>
    <property type="match status" value="1"/>
</dbReference>
<dbReference type="NCBIfam" id="TIGR00184">
    <property type="entry name" value="purA"/>
    <property type="match status" value="1"/>
</dbReference>
<dbReference type="PANTHER" id="PTHR11846">
    <property type="entry name" value="ADENYLOSUCCINATE SYNTHETASE"/>
    <property type="match status" value="1"/>
</dbReference>
<dbReference type="PANTHER" id="PTHR11846:SF0">
    <property type="entry name" value="ADENYLOSUCCINATE SYNTHETASE"/>
    <property type="match status" value="1"/>
</dbReference>
<dbReference type="Pfam" id="PF00709">
    <property type="entry name" value="Adenylsucc_synt"/>
    <property type="match status" value="1"/>
</dbReference>
<dbReference type="SMART" id="SM00788">
    <property type="entry name" value="Adenylsucc_synt"/>
    <property type="match status" value="1"/>
</dbReference>
<dbReference type="SUPFAM" id="SSF52540">
    <property type="entry name" value="P-loop containing nucleoside triphosphate hydrolases"/>
    <property type="match status" value="1"/>
</dbReference>
<dbReference type="PROSITE" id="PS01266">
    <property type="entry name" value="ADENYLOSUCCIN_SYN_1"/>
    <property type="match status" value="1"/>
</dbReference>
<dbReference type="PROSITE" id="PS00513">
    <property type="entry name" value="ADENYLOSUCCIN_SYN_2"/>
    <property type="match status" value="1"/>
</dbReference>
<accession>Q6NF38</accession>
<evidence type="ECO:0000255" key="1">
    <source>
        <dbReference type="HAMAP-Rule" id="MF_00011"/>
    </source>
</evidence>
<organism>
    <name type="scientific">Corynebacterium diphtheriae (strain ATCC 700971 / NCTC 13129 / Biotype gravis)</name>
    <dbReference type="NCBI Taxonomy" id="257309"/>
    <lineage>
        <taxon>Bacteria</taxon>
        <taxon>Bacillati</taxon>
        <taxon>Actinomycetota</taxon>
        <taxon>Actinomycetes</taxon>
        <taxon>Mycobacteriales</taxon>
        <taxon>Corynebacteriaceae</taxon>
        <taxon>Corynebacterium</taxon>
    </lineage>
</organism>
<keyword id="KW-0963">Cytoplasm</keyword>
<keyword id="KW-0342">GTP-binding</keyword>
<keyword id="KW-0436">Ligase</keyword>
<keyword id="KW-0460">Magnesium</keyword>
<keyword id="KW-0479">Metal-binding</keyword>
<keyword id="KW-0547">Nucleotide-binding</keyword>
<keyword id="KW-0658">Purine biosynthesis</keyword>
<keyword id="KW-1185">Reference proteome</keyword>